<protein>
    <recommendedName>
        <fullName evidence="1">Trigger factor</fullName>
        <shortName evidence="1">TF</shortName>
        <ecNumber evidence="1">5.2.1.8</ecNumber>
    </recommendedName>
    <alternativeName>
        <fullName evidence="1">PPIase</fullName>
    </alternativeName>
</protein>
<name>TIG_LEPBJ</name>
<reference key="1">
    <citation type="journal article" date="2006" name="Proc. Natl. Acad. Sci. U.S.A.">
        <title>Genome reduction in Leptospira borgpetersenii reflects limited transmission potential.</title>
        <authorList>
            <person name="Bulach D.M."/>
            <person name="Zuerner R.L."/>
            <person name="Wilson P."/>
            <person name="Seemann T."/>
            <person name="McGrath A."/>
            <person name="Cullen P.A."/>
            <person name="Davis J."/>
            <person name="Johnson M."/>
            <person name="Kuczek E."/>
            <person name="Alt D.P."/>
            <person name="Peterson-Burch B."/>
            <person name="Coppel R.L."/>
            <person name="Rood J.I."/>
            <person name="Davies J.K."/>
            <person name="Adler B."/>
        </authorList>
    </citation>
    <scope>NUCLEOTIDE SEQUENCE [LARGE SCALE GENOMIC DNA]</scope>
    <source>
        <strain>JB197</strain>
    </source>
</reference>
<proteinExistence type="inferred from homology"/>
<evidence type="ECO:0000255" key="1">
    <source>
        <dbReference type="HAMAP-Rule" id="MF_00303"/>
    </source>
</evidence>
<comment type="function">
    <text evidence="1">Involved in protein export. Acts as a chaperone by maintaining the newly synthesized protein in an open conformation. Functions as a peptidyl-prolyl cis-trans isomerase.</text>
</comment>
<comment type="catalytic activity">
    <reaction evidence="1">
        <text>[protein]-peptidylproline (omega=180) = [protein]-peptidylproline (omega=0)</text>
        <dbReference type="Rhea" id="RHEA:16237"/>
        <dbReference type="Rhea" id="RHEA-COMP:10747"/>
        <dbReference type="Rhea" id="RHEA-COMP:10748"/>
        <dbReference type="ChEBI" id="CHEBI:83833"/>
        <dbReference type="ChEBI" id="CHEBI:83834"/>
        <dbReference type="EC" id="5.2.1.8"/>
    </reaction>
</comment>
<comment type="subcellular location">
    <subcellularLocation>
        <location>Cytoplasm</location>
    </subcellularLocation>
    <text evidence="1">About half TF is bound to the ribosome near the polypeptide exit tunnel while the other half is free in the cytoplasm.</text>
</comment>
<comment type="domain">
    <text evidence="1">Consists of 3 domains; the N-terminus binds the ribosome, the middle domain has PPIase activity, while the C-terminus has intrinsic chaperone activity on its own.</text>
</comment>
<comment type="similarity">
    <text evidence="1">Belongs to the FKBP-type PPIase family. Tig subfamily.</text>
</comment>
<keyword id="KW-0131">Cell cycle</keyword>
<keyword id="KW-0132">Cell division</keyword>
<keyword id="KW-0143">Chaperone</keyword>
<keyword id="KW-0963">Cytoplasm</keyword>
<keyword id="KW-0413">Isomerase</keyword>
<keyword id="KW-0697">Rotamase</keyword>
<gene>
    <name evidence="1" type="primary">tig</name>
    <name type="ordered locus">LBJ_1083</name>
</gene>
<feature type="chain" id="PRO_1000022701" description="Trigger factor">
    <location>
        <begin position="1"/>
        <end position="451"/>
    </location>
</feature>
<feature type="domain" description="PPIase FKBP-type" evidence="1">
    <location>
        <begin position="163"/>
        <end position="248"/>
    </location>
</feature>
<accession>Q04TR5</accession>
<dbReference type="EC" id="5.2.1.8" evidence="1"/>
<dbReference type="EMBL" id="CP000350">
    <property type="protein sequence ID" value="ABJ75705.1"/>
    <property type="molecule type" value="Genomic_DNA"/>
</dbReference>
<dbReference type="RefSeq" id="WP_011669903.1">
    <property type="nucleotide sequence ID" value="NC_008510.1"/>
</dbReference>
<dbReference type="SMR" id="Q04TR5"/>
<dbReference type="KEGG" id="lbj:LBJ_1083"/>
<dbReference type="HOGENOM" id="CLU_033058_3_2_12"/>
<dbReference type="Proteomes" id="UP000000656">
    <property type="component" value="Chromosome 1"/>
</dbReference>
<dbReference type="GO" id="GO:0005737">
    <property type="term" value="C:cytoplasm"/>
    <property type="evidence" value="ECO:0007669"/>
    <property type="project" value="UniProtKB-SubCell"/>
</dbReference>
<dbReference type="GO" id="GO:0003755">
    <property type="term" value="F:peptidyl-prolyl cis-trans isomerase activity"/>
    <property type="evidence" value="ECO:0007669"/>
    <property type="project" value="UniProtKB-UniRule"/>
</dbReference>
<dbReference type="GO" id="GO:0044183">
    <property type="term" value="F:protein folding chaperone"/>
    <property type="evidence" value="ECO:0007669"/>
    <property type="project" value="TreeGrafter"/>
</dbReference>
<dbReference type="GO" id="GO:0043022">
    <property type="term" value="F:ribosome binding"/>
    <property type="evidence" value="ECO:0007669"/>
    <property type="project" value="TreeGrafter"/>
</dbReference>
<dbReference type="GO" id="GO:0051083">
    <property type="term" value="P:'de novo' cotranslational protein folding"/>
    <property type="evidence" value="ECO:0007669"/>
    <property type="project" value="TreeGrafter"/>
</dbReference>
<dbReference type="GO" id="GO:0051301">
    <property type="term" value="P:cell division"/>
    <property type="evidence" value="ECO:0007669"/>
    <property type="project" value="UniProtKB-KW"/>
</dbReference>
<dbReference type="GO" id="GO:0061077">
    <property type="term" value="P:chaperone-mediated protein folding"/>
    <property type="evidence" value="ECO:0007669"/>
    <property type="project" value="TreeGrafter"/>
</dbReference>
<dbReference type="GO" id="GO:0015031">
    <property type="term" value="P:protein transport"/>
    <property type="evidence" value="ECO:0007669"/>
    <property type="project" value="UniProtKB-UniRule"/>
</dbReference>
<dbReference type="GO" id="GO:0043335">
    <property type="term" value="P:protein unfolding"/>
    <property type="evidence" value="ECO:0007669"/>
    <property type="project" value="TreeGrafter"/>
</dbReference>
<dbReference type="FunFam" id="3.30.70.1050:FF:000008">
    <property type="entry name" value="Trigger factor"/>
    <property type="match status" value="1"/>
</dbReference>
<dbReference type="Gene3D" id="3.10.50.40">
    <property type="match status" value="1"/>
</dbReference>
<dbReference type="Gene3D" id="3.30.70.1050">
    <property type="entry name" value="Trigger factor ribosome-binding domain"/>
    <property type="match status" value="1"/>
</dbReference>
<dbReference type="Gene3D" id="1.10.3120.10">
    <property type="entry name" value="Trigger factor, C-terminal domain"/>
    <property type="match status" value="1"/>
</dbReference>
<dbReference type="HAMAP" id="MF_00303">
    <property type="entry name" value="Trigger_factor_Tig"/>
    <property type="match status" value="1"/>
</dbReference>
<dbReference type="InterPro" id="IPR046357">
    <property type="entry name" value="PPIase_dom_sf"/>
</dbReference>
<dbReference type="InterPro" id="IPR001179">
    <property type="entry name" value="PPIase_FKBP_dom"/>
</dbReference>
<dbReference type="InterPro" id="IPR005215">
    <property type="entry name" value="Trig_fac"/>
</dbReference>
<dbReference type="InterPro" id="IPR008880">
    <property type="entry name" value="Trigger_fac_C"/>
</dbReference>
<dbReference type="InterPro" id="IPR037041">
    <property type="entry name" value="Trigger_fac_C_sf"/>
</dbReference>
<dbReference type="InterPro" id="IPR008881">
    <property type="entry name" value="Trigger_fac_ribosome-bd_bac"/>
</dbReference>
<dbReference type="InterPro" id="IPR036611">
    <property type="entry name" value="Trigger_fac_ribosome-bd_sf"/>
</dbReference>
<dbReference type="InterPro" id="IPR027304">
    <property type="entry name" value="Trigger_fact/SurA_dom_sf"/>
</dbReference>
<dbReference type="NCBIfam" id="TIGR00115">
    <property type="entry name" value="tig"/>
    <property type="match status" value="1"/>
</dbReference>
<dbReference type="PANTHER" id="PTHR30560">
    <property type="entry name" value="TRIGGER FACTOR CHAPERONE AND PEPTIDYL-PROLYL CIS/TRANS ISOMERASE"/>
    <property type="match status" value="1"/>
</dbReference>
<dbReference type="PANTHER" id="PTHR30560:SF3">
    <property type="entry name" value="TRIGGER FACTOR-LIKE PROTEIN TIG, CHLOROPLASTIC"/>
    <property type="match status" value="1"/>
</dbReference>
<dbReference type="Pfam" id="PF00254">
    <property type="entry name" value="FKBP_C"/>
    <property type="match status" value="1"/>
</dbReference>
<dbReference type="Pfam" id="PF05698">
    <property type="entry name" value="Trigger_C"/>
    <property type="match status" value="1"/>
</dbReference>
<dbReference type="Pfam" id="PF05697">
    <property type="entry name" value="Trigger_N"/>
    <property type="match status" value="1"/>
</dbReference>
<dbReference type="PIRSF" id="PIRSF003095">
    <property type="entry name" value="Trigger_factor"/>
    <property type="match status" value="1"/>
</dbReference>
<dbReference type="SUPFAM" id="SSF54534">
    <property type="entry name" value="FKBP-like"/>
    <property type="match status" value="1"/>
</dbReference>
<dbReference type="SUPFAM" id="SSF109998">
    <property type="entry name" value="Triger factor/SurA peptide-binding domain-like"/>
    <property type="match status" value="1"/>
</dbReference>
<dbReference type="SUPFAM" id="SSF102735">
    <property type="entry name" value="Trigger factor ribosome-binding domain"/>
    <property type="match status" value="1"/>
</dbReference>
<sequence length="451" mass="52171">MDYKTKKNSNATVDIKLTFEASDLEKAFDKTYAEKQKNIKIPGFRPGKAPLNMVKRHLGDTVASDAINTLIVDGMASILTKLEHPMVRFPKFEIQDYQPGKNLIATAVYETNPEITLGKYKKIKVKLPEVSVSDSDIFDEIENIRKQLARKQLKEDGQTAASGDIIDMEYTVCEKGQEPKNASNTSNDYHLGHENNLKGFDENLYGLGVGDRKEFSHTFPEDYLQNEVAGKTFEYSVTIKALYVNILPTVDDDLAAEFDGSDSLNTLKDKIRKNLKERFEEGIRNKKLEEIFKEIIDDSKYIFPDSYVKEESEHVFHNMIHEFKLPHITMEKYAKMIKKDLKEVQESFRNLAENRLKHFFTRQKIAEIENVTYTETDFDADLEKLASSYQIPLSDLKEELEKGKLMDQYRENFFAKKVDHTLFDLVEKKYTNKLSIGQVKDYLNQKEEQKV</sequence>
<organism>
    <name type="scientific">Leptospira borgpetersenii serovar Hardjo-bovis (strain JB197)</name>
    <dbReference type="NCBI Taxonomy" id="355277"/>
    <lineage>
        <taxon>Bacteria</taxon>
        <taxon>Pseudomonadati</taxon>
        <taxon>Spirochaetota</taxon>
        <taxon>Spirochaetia</taxon>
        <taxon>Leptospirales</taxon>
        <taxon>Leptospiraceae</taxon>
        <taxon>Leptospira</taxon>
    </lineage>
</organism>